<organism>
    <name type="scientific">Dehalococcoides mccartyi (strain ATCC BAA-2266 / KCTC 15142 / 195)</name>
    <name type="common">Dehalococcoides ethenogenes (strain 195)</name>
    <dbReference type="NCBI Taxonomy" id="243164"/>
    <lineage>
        <taxon>Bacteria</taxon>
        <taxon>Bacillati</taxon>
        <taxon>Chloroflexota</taxon>
        <taxon>Dehalococcoidia</taxon>
        <taxon>Dehalococcoidales</taxon>
        <taxon>Dehalococcoidaceae</taxon>
        <taxon>Dehalococcoides</taxon>
    </lineage>
</organism>
<name>ARGC_DEHM1</name>
<feature type="chain" id="PRO_1000118056" description="N-acetyl-gamma-glutamyl-phosphate reductase">
    <location>
        <begin position="1"/>
        <end position="341"/>
    </location>
</feature>
<feature type="active site" evidence="1">
    <location>
        <position position="147"/>
    </location>
</feature>
<protein>
    <recommendedName>
        <fullName evidence="1">N-acetyl-gamma-glutamyl-phosphate reductase</fullName>
        <shortName evidence="1">AGPR</shortName>
        <ecNumber evidence="1">1.2.1.38</ecNumber>
    </recommendedName>
    <alternativeName>
        <fullName evidence="1">N-acetyl-glutamate semialdehyde dehydrogenase</fullName>
        <shortName evidence="1">NAGSA dehydrogenase</shortName>
    </alternativeName>
</protein>
<gene>
    <name evidence="1" type="primary">argC</name>
    <name type="ordered locus">DET1626</name>
</gene>
<comment type="function">
    <text evidence="1">Catalyzes the NADPH-dependent reduction of N-acetyl-5-glutamyl phosphate to yield N-acetyl-L-glutamate 5-semialdehyde.</text>
</comment>
<comment type="catalytic activity">
    <reaction evidence="1">
        <text>N-acetyl-L-glutamate 5-semialdehyde + phosphate + NADP(+) = N-acetyl-L-glutamyl 5-phosphate + NADPH + H(+)</text>
        <dbReference type="Rhea" id="RHEA:21588"/>
        <dbReference type="ChEBI" id="CHEBI:15378"/>
        <dbReference type="ChEBI" id="CHEBI:29123"/>
        <dbReference type="ChEBI" id="CHEBI:43474"/>
        <dbReference type="ChEBI" id="CHEBI:57783"/>
        <dbReference type="ChEBI" id="CHEBI:57936"/>
        <dbReference type="ChEBI" id="CHEBI:58349"/>
        <dbReference type="EC" id="1.2.1.38"/>
    </reaction>
</comment>
<comment type="pathway">
    <text evidence="1">Amino-acid biosynthesis; L-arginine biosynthesis; N(2)-acetyl-L-ornithine from L-glutamate: step 3/4.</text>
</comment>
<comment type="subcellular location">
    <subcellularLocation>
        <location evidence="1">Cytoplasm</location>
    </subcellularLocation>
</comment>
<comment type="similarity">
    <text evidence="1">Belongs to the NAGSA dehydrogenase family. Type 1 subfamily.</text>
</comment>
<dbReference type="EC" id="1.2.1.38" evidence="1"/>
<dbReference type="EMBL" id="CP000027">
    <property type="protein sequence ID" value="AAW39080.1"/>
    <property type="molecule type" value="Genomic_DNA"/>
</dbReference>
<dbReference type="RefSeq" id="WP_010937296.1">
    <property type="nucleotide sequence ID" value="NC_002936.3"/>
</dbReference>
<dbReference type="SMR" id="Q3Z629"/>
<dbReference type="FunCoup" id="Q3Z629">
    <property type="interactions" value="275"/>
</dbReference>
<dbReference type="STRING" id="243164.DET1626"/>
<dbReference type="GeneID" id="3229037"/>
<dbReference type="KEGG" id="det:DET1626"/>
<dbReference type="PATRIC" id="fig|243164.10.peg.1536"/>
<dbReference type="eggNOG" id="COG0002">
    <property type="taxonomic scope" value="Bacteria"/>
</dbReference>
<dbReference type="HOGENOM" id="CLU_006384_0_1_0"/>
<dbReference type="InParanoid" id="Q3Z629"/>
<dbReference type="UniPathway" id="UPA00068">
    <property type="reaction ID" value="UER00108"/>
</dbReference>
<dbReference type="Proteomes" id="UP000008289">
    <property type="component" value="Chromosome"/>
</dbReference>
<dbReference type="GO" id="GO:0005737">
    <property type="term" value="C:cytoplasm"/>
    <property type="evidence" value="ECO:0007669"/>
    <property type="project" value="UniProtKB-SubCell"/>
</dbReference>
<dbReference type="GO" id="GO:0003942">
    <property type="term" value="F:N-acetyl-gamma-glutamyl-phosphate reductase activity"/>
    <property type="evidence" value="ECO:0007669"/>
    <property type="project" value="UniProtKB-UniRule"/>
</dbReference>
<dbReference type="GO" id="GO:0051287">
    <property type="term" value="F:NAD binding"/>
    <property type="evidence" value="ECO:0007669"/>
    <property type="project" value="InterPro"/>
</dbReference>
<dbReference type="GO" id="GO:0070401">
    <property type="term" value="F:NADP+ binding"/>
    <property type="evidence" value="ECO:0007669"/>
    <property type="project" value="InterPro"/>
</dbReference>
<dbReference type="GO" id="GO:0006526">
    <property type="term" value="P:L-arginine biosynthetic process"/>
    <property type="evidence" value="ECO:0007669"/>
    <property type="project" value="UniProtKB-UniRule"/>
</dbReference>
<dbReference type="CDD" id="cd23934">
    <property type="entry name" value="AGPR_1_C"/>
    <property type="match status" value="1"/>
</dbReference>
<dbReference type="CDD" id="cd17895">
    <property type="entry name" value="AGPR_1_N"/>
    <property type="match status" value="1"/>
</dbReference>
<dbReference type="FunFam" id="3.30.360.10:FF:000014">
    <property type="entry name" value="N-acetyl-gamma-glutamyl-phosphate reductase"/>
    <property type="match status" value="1"/>
</dbReference>
<dbReference type="Gene3D" id="3.30.360.10">
    <property type="entry name" value="Dihydrodipicolinate Reductase, domain 2"/>
    <property type="match status" value="1"/>
</dbReference>
<dbReference type="Gene3D" id="3.40.50.720">
    <property type="entry name" value="NAD(P)-binding Rossmann-like Domain"/>
    <property type="match status" value="1"/>
</dbReference>
<dbReference type="HAMAP" id="MF_00150">
    <property type="entry name" value="ArgC_type1"/>
    <property type="match status" value="1"/>
</dbReference>
<dbReference type="InterPro" id="IPR023013">
    <property type="entry name" value="AGPR_AS"/>
</dbReference>
<dbReference type="InterPro" id="IPR000706">
    <property type="entry name" value="AGPR_type-1"/>
</dbReference>
<dbReference type="InterPro" id="IPR036291">
    <property type="entry name" value="NAD(P)-bd_dom_sf"/>
</dbReference>
<dbReference type="InterPro" id="IPR050085">
    <property type="entry name" value="NAGSA_dehydrogenase"/>
</dbReference>
<dbReference type="InterPro" id="IPR000534">
    <property type="entry name" value="Semialdehyde_DH_NAD-bd"/>
</dbReference>
<dbReference type="NCBIfam" id="TIGR01850">
    <property type="entry name" value="argC"/>
    <property type="match status" value="1"/>
</dbReference>
<dbReference type="PANTHER" id="PTHR32338:SF10">
    <property type="entry name" value="N-ACETYL-GAMMA-GLUTAMYL-PHOSPHATE REDUCTASE, CHLOROPLASTIC-RELATED"/>
    <property type="match status" value="1"/>
</dbReference>
<dbReference type="PANTHER" id="PTHR32338">
    <property type="entry name" value="N-ACETYL-GAMMA-GLUTAMYL-PHOSPHATE REDUCTASE, CHLOROPLASTIC-RELATED-RELATED"/>
    <property type="match status" value="1"/>
</dbReference>
<dbReference type="Pfam" id="PF01118">
    <property type="entry name" value="Semialdhyde_dh"/>
    <property type="match status" value="1"/>
</dbReference>
<dbReference type="Pfam" id="PF22698">
    <property type="entry name" value="Semialdhyde_dhC_1"/>
    <property type="match status" value="1"/>
</dbReference>
<dbReference type="SMART" id="SM00859">
    <property type="entry name" value="Semialdhyde_dh"/>
    <property type="match status" value="1"/>
</dbReference>
<dbReference type="SUPFAM" id="SSF55347">
    <property type="entry name" value="Glyceraldehyde-3-phosphate dehydrogenase-like, C-terminal domain"/>
    <property type="match status" value="1"/>
</dbReference>
<dbReference type="SUPFAM" id="SSF51735">
    <property type="entry name" value="NAD(P)-binding Rossmann-fold domains"/>
    <property type="match status" value="1"/>
</dbReference>
<dbReference type="PROSITE" id="PS01224">
    <property type="entry name" value="ARGC"/>
    <property type="match status" value="1"/>
</dbReference>
<sequence>MKKYKAGIINVTGYAGLELARILASHPSVELCSVTGRSLAGKKLSDAFPYLHSLDLPITESLEGEVDIAFMALPHKEGASLVPDLLSKGMRVIDISADFRLKDPPLYQAWYGFEHPCPELLAEAVYGLPELKRKDIASARLVANPGCYPTSAILGLAPAFKMDLIEPNAIVDAKSGLSGSGRTPTAKNIFCEASEDVCAYSIGTHRHQPEIVQELSLVGGGVIPRVTFCPHLVPMSRGILSSAYARLKQPVTDEEVKEIYRRFYKDEPFVKITAEPPHTRYTRGTNMCFIYPVVDALNERLIVISCIDNLVKGAAGQAVQNMNIMLGLSEDTGLKAIAALP</sequence>
<accession>Q3Z629</accession>
<evidence type="ECO:0000255" key="1">
    <source>
        <dbReference type="HAMAP-Rule" id="MF_00150"/>
    </source>
</evidence>
<proteinExistence type="inferred from homology"/>
<reference key="1">
    <citation type="journal article" date="2005" name="Science">
        <title>Genome sequence of the PCE-dechlorinating bacterium Dehalococcoides ethenogenes.</title>
        <authorList>
            <person name="Seshadri R."/>
            <person name="Adrian L."/>
            <person name="Fouts D.E."/>
            <person name="Eisen J.A."/>
            <person name="Phillippy A.M."/>
            <person name="Methe B.A."/>
            <person name="Ward N.L."/>
            <person name="Nelson W.C."/>
            <person name="DeBoy R.T."/>
            <person name="Khouri H.M."/>
            <person name="Kolonay J.F."/>
            <person name="Dodson R.J."/>
            <person name="Daugherty S.C."/>
            <person name="Brinkac L.M."/>
            <person name="Sullivan S.A."/>
            <person name="Madupu R."/>
            <person name="Nelson K.E."/>
            <person name="Kang K.H."/>
            <person name="Impraim M."/>
            <person name="Tran K."/>
            <person name="Robinson J.M."/>
            <person name="Forberger H.A."/>
            <person name="Fraser C.M."/>
            <person name="Zinder S.H."/>
            <person name="Heidelberg J.F."/>
        </authorList>
    </citation>
    <scope>NUCLEOTIDE SEQUENCE [LARGE SCALE GENOMIC DNA]</scope>
    <source>
        <strain>ATCC BAA-2266 / KCTC 15142 / 195</strain>
    </source>
</reference>
<keyword id="KW-0028">Amino-acid biosynthesis</keyword>
<keyword id="KW-0055">Arginine biosynthesis</keyword>
<keyword id="KW-0963">Cytoplasm</keyword>
<keyword id="KW-0521">NADP</keyword>
<keyword id="KW-0560">Oxidoreductase</keyword>